<accession>P0AF19</accession>
<accession>P15300</accession>
<name>NAGA_ECO57</name>
<keyword id="KW-0119">Carbohydrate metabolism</keyword>
<keyword id="KW-0378">Hydrolase</keyword>
<keyword id="KW-0479">Metal-binding</keyword>
<keyword id="KW-1185">Reference proteome</keyword>
<organism>
    <name type="scientific">Escherichia coli O157:H7</name>
    <dbReference type="NCBI Taxonomy" id="83334"/>
    <lineage>
        <taxon>Bacteria</taxon>
        <taxon>Pseudomonadati</taxon>
        <taxon>Pseudomonadota</taxon>
        <taxon>Gammaproteobacteria</taxon>
        <taxon>Enterobacterales</taxon>
        <taxon>Enterobacteriaceae</taxon>
        <taxon>Escherichia</taxon>
    </lineage>
</organism>
<reference key="1">
    <citation type="journal article" date="2001" name="Nature">
        <title>Genome sequence of enterohaemorrhagic Escherichia coli O157:H7.</title>
        <authorList>
            <person name="Perna N.T."/>
            <person name="Plunkett G. III"/>
            <person name="Burland V."/>
            <person name="Mau B."/>
            <person name="Glasner J.D."/>
            <person name="Rose D.J."/>
            <person name="Mayhew G.F."/>
            <person name="Evans P.S."/>
            <person name="Gregor J."/>
            <person name="Kirkpatrick H.A."/>
            <person name="Posfai G."/>
            <person name="Hackett J."/>
            <person name="Klink S."/>
            <person name="Boutin A."/>
            <person name="Shao Y."/>
            <person name="Miller L."/>
            <person name="Grotbeck E.J."/>
            <person name="Davis N.W."/>
            <person name="Lim A."/>
            <person name="Dimalanta E.T."/>
            <person name="Potamousis K."/>
            <person name="Apodaca J."/>
            <person name="Anantharaman T.S."/>
            <person name="Lin J."/>
            <person name="Yen G."/>
            <person name="Schwartz D.C."/>
            <person name="Welch R.A."/>
            <person name="Blattner F.R."/>
        </authorList>
    </citation>
    <scope>NUCLEOTIDE SEQUENCE [LARGE SCALE GENOMIC DNA]</scope>
    <source>
        <strain>O157:H7 / EDL933 / ATCC 700927 / EHEC</strain>
    </source>
</reference>
<reference key="2">
    <citation type="journal article" date="2001" name="DNA Res.">
        <title>Complete genome sequence of enterohemorrhagic Escherichia coli O157:H7 and genomic comparison with a laboratory strain K-12.</title>
        <authorList>
            <person name="Hayashi T."/>
            <person name="Makino K."/>
            <person name="Ohnishi M."/>
            <person name="Kurokawa K."/>
            <person name="Ishii K."/>
            <person name="Yokoyama K."/>
            <person name="Han C.-G."/>
            <person name="Ohtsubo E."/>
            <person name="Nakayama K."/>
            <person name="Murata T."/>
            <person name="Tanaka M."/>
            <person name="Tobe T."/>
            <person name="Iida T."/>
            <person name="Takami H."/>
            <person name="Honda T."/>
            <person name="Sasakawa C."/>
            <person name="Ogasawara N."/>
            <person name="Yasunaga T."/>
            <person name="Kuhara S."/>
            <person name="Shiba T."/>
            <person name="Hattori M."/>
            <person name="Shinagawa H."/>
        </authorList>
    </citation>
    <scope>NUCLEOTIDE SEQUENCE [LARGE SCALE GENOMIC DNA]</scope>
    <source>
        <strain>O157:H7 / Sakai / RIMD 0509952 / EHEC</strain>
    </source>
</reference>
<reference key="3">
    <citation type="journal article" date="2013" name="BMC Microbiol.">
        <title>Genetic analysis of the roles of agaA, agaI, and agaS genes in the N-acetyl-D-galactosamine and D-galactosamine catabolic pathways in Escherichia coli strains O157:H7 and C.</title>
        <authorList>
            <person name="Hu Z."/>
            <person name="Patel I.R."/>
            <person name="Mukherjee A."/>
        </authorList>
    </citation>
    <scope>FUNCTION</scope>
    <scope>INDUCTION</scope>
    <scope>DISRUPTION PHENOTYPE</scope>
    <source>
        <strain>O157:H7 / EDL933 / ATCC 700927 / EHEC</strain>
    </source>
</reference>
<feature type="chain" id="PRO_0000170916" description="N-acetylglucosamine-6-phosphate deacetylase">
    <location>
        <begin position="1"/>
        <end position="382"/>
    </location>
</feature>
<feature type="active site" description="Proton donor/acceptor" evidence="1">
    <location>
        <position position="273"/>
    </location>
</feature>
<feature type="binding site" evidence="1">
    <location>
        <position position="131"/>
    </location>
    <ligand>
        <name>a divalent metal cation</name>
        <dbReference type="ChEBI" id="CHEBI:60240"/>
    </ligand>
</feature>
<feature type="binding site" evidence="1">
    <location>
        <begin position="142"/>
        <end position="143"/>
    </location>
    <ligand>
        <name>substrate</name>
    </ligand>
</feature>
<feature type="binding site" evidence="1">
    <location>
        <position position="195"/>
    </location>
    <ligand>
        <name>a divalent metal cation</name>
        <dbReference type="ChEBI" id="CHEBI:60240"/>
    </ligand>
</feature>
<feature type="binding site" evidence="1">
    <location>
        <position position="216"/>
    </location>
    <ligand>
        <name>a divalent metal cation</name>
        <dbReference type="ChEBI" id="CHEBI:60240"/>
    </ligand>
</feature>
<feature type="binding site" evidence="1">
    <location>
        <begin position="219"/>
        <end position="220"/>
    </location>
    <ligand>
        <name>substrate</name>
    </ligand>
</feature>
<feature type="binding site" evidence="1">
    <location>
        <position position="227"/>
    </location>
    <ligand>
        <name>substrate</name>
    </ligand>
</feature>
<feature type="binding site" evidence="1">
    <location>
        <begin position="248"/>
        <end position="251"/>
    </location>
    <ligand>
        <name>substrate</name>
    </ligand>
</feature>
<feature type="binding site" evidence="1">
    <location>
        <begin position="306"/>
        <end position="308"/>
    </location>
    <ligand>
        <name>substrate</name>
    </ligand>
</feature>
<protein>
    <recommendedName>
        <fullName evidence="1">N-acetylglucosamine-6-phosphate deacetylase</fullName>
        <shortName evidence="1">GlcNAc 6-P deacetylase</shortName>
        <ecNumber evidence="1">3.5.1.25</ecNumber>
    </recommendedName>
</protein>
<comment type="function">
    <text evidence="1 4">Involved in the first committed step in the biosynthesis of amino-sugar-nucleotides. Catalyzes the hydrolysis of the N-acetyl group of N-acetylglucosamine-6-phosphate (GlcNAc-6-P) to yield glucosamine 6-phosphate and acetate. Can probably also catalyze the deacetylation of N-acetyl-D-galactosamine 6-phosphate to D-galactosamine 6-phosphate (Probable).</text>
</comment>
<comment type="catalytic activity">
    <reaction evidence="1">
        <text>N-acetyl-D-glucosamine 6-phosphate + H2O = D-glucosamine 6-phosphate + acetate</text>
        <dbReference type="Rhea" id="RHEA:22936"/>
        <dbReference type="ChEBI" id="CHEBI:15377"/>
        <dbReference type="ChEBI" id="CHEBI:30089"/>
        <dbReference type="ChEBI" id="CHEBI:57513"/>
        <dbReference type="ChEBI" id="CHEBI:58725"/>
        <dbReference type="EC" id="3.5.1.25"/>
    </reaction>
</comment>
<comment type="cofactor">
    <cofactor evidence="1">
        <name>a divalent metal cation</name>
        <dbReference type="ChEBI" id="CHEBI:60240"/>
    </cofactor>
    <text evidence="1">Binds 1 divalent metal cation per subunit.</text>
</comment>
<comment type="pathway">
    <text evidence="1">Amino-sugar metabolism; N-acetylneuraminate degradation; D-fructose 6-phosphate from N-acetylneuraminate: step 4/5.</text>
</comment>
<comment type="subunit">
    <text evidence="1">Homotetramer.</text>
</comment>
<comment type="induction">
    <text evidence="2">Induced by growth on N-acetyl-D-glucosamine but not by growth on N-acetyl-D-galactosamine.</text>
</comment>
<comment type="disruption phenotype">
    <text evidence="2">Deletion mutant can grow on N-acetyl-D-galactosamine but not on N-acetyl-D-glucosamine.</text>
</comment>
<comment type="miscellaneous">
    <text evidence="2">NagA and AgaA can substitute for each other and function in both the N-acetyl-D-glucosamine and N-acetyl-D-galactosamine pathways.</text>
</comment>
<comment type="similarity">
    <text evidence="3">Belongs to the metallo-dependent hydrolases superfamily. NagA family.</text>
</comment>
<gene>
    <name type="primary">nagA</name>
    <name type="ordered locus">Z0824</name>
    <name type="ordered locus">ECs0707</name>
</gene>
<evidence type="ECO:0000250" key="1">
    <source>
        <dbReference type="UniProtKB" id="P0AF18"/>
    </source>
</evidence>
<evidence type="ECO:0000269" key="2">
    <source>
    </source>
</evidence>
<evidence type="ECO:0000305" key="3"/>
<evidence type="ECO:0000305" key="4">
    <source>
    </source>
</evidence>
<proteinExistence type="evidence at transcript level"/>
<dbReference type="EC" id="3.5.1.25" evidence="1"/>
<dbReference type="EMBL" id="AE005174">
    <property type="protein sequence ID" value="AAG54999.1"/>
    <property type="molecule type" value="Genomic_DNA"/>
</dbReference>
<dbReference type="EMBL" id="BA000007">
    <property type="protein sequence ID" value="BAB34130.1"/>
    <property type="molecule type" value="Genomic_DNA"/>
</dbReference>
<dbReference type="PIR" id="C85567">
    <property type="entry name" value="C85567"/>
</dbReference>
<dbReference type="PIR" id="C90717">
    <property type="entry name" value="C90717"/>
</dbReference>
<dbReference type="RefSeq" id="NP_308734.1">
    <property type="nucleotide sequence ID" value="NC_002695.1"/>
</dbReference>
<dbReference type="RefSeq" id="WP_000271153.1">
    <property type="nucleotide sequence ID" value="NZ_VOAI01000012.1"/>
</dbReference>
<dbReference type="SMR" id="P0AF19"/>
<dbReference type="STRING" id="155864.Z0824"/>
<dbReference type="GeneID" id="75204968"/>
<dbReference type="GeneID" id="917076"/>
<dbReference type="KEGG" id="ece:Z0824"/>
<dbReference type="KEGG" id="ecs:ECs_0707"/>
<dbReference type="PATRIC" id="fig|386585.9.peg.819"/>
<dbReference type="eggNOG" id="COG1820">
    <property type="taxonomic scope" value="Bacteria"/>
</dbReference>
<dbReference type="HOGENOM" id="CLU_032482_2_2_6"/>
<dbReference type="OMA" id="PCRKGAH"/>
<dbReference type="UniPathway" id="UPA00629">
    <property type="reaction ID" value="UER00683"/>
</dbReference>
<dbReference type="Proteomes" id="UP000000558">
    <property type="component" value="Chromosome"/>
</dbReference>
<dbReference type="Proteomes" id="UP000002519">
    <property type="component" value="Chromosome"/>
</dbReference>
<dbReference type="GO" id="GO:0046872">
    <property type="term" value="F:metal ion binding"/>
    <property type="evidence" value="ECO:0007669"/>
    <property type="project" value="UniProtKB-KW"/>
</dbReference>
<dbReference type="GO" id="GO:0008448">
    <property type="term" value="F:N-acetylglucosamine-6-phosphate deacetylase activity"/>
    <property type="evidence" value="ECO:0000250"/>
    <property type="project" value="UniProtKB"/>
</dbReference>
<dbReference type="GO" id="GO:0006046">
    <property type="term" value="P:N-acetylglucosamine catabolic process"/>
    <property type="evidence" value="ECO:0000250"/>
    <property type="project" value="UniProtKB"/>
</dbReference>
<dbReference type="GO" id="GO:0019262">
    <property type="term" value="P:N-acetylneuraminate catabolic process"/>
    <property type="evidence" value="ECO:0007669"/>
    <property type="project" value="UniProtKB-UniPathway"/>
</dbReference>
<dbReference type="GO" id="GO:0051289">
    <property type="term" value="P:protein homotetramerization"/>
    <property type="evidence" value="ECO:0000250"/>
    <property type="project" value="UniProtKB"/>
</dbReference>
<dbReference type="CDD" id="cd00854">
    <property type="entry name" value="NagA"/>
    <property type="match status" value="1"/>
</dbReference>
<dbReference type="FunFam" id="3.20.20.140:FF:000004">
    <property type="entry name" value="N-acetylglucosamine-6-phosphate deacetylase"/>
    <property type="match status" value="1"/>
</dbReference>
<dbReference type="Gene3D" id="3.20.20.140">
    <property type="entry name" value="Metal-dependent hydrolases"/>
    <property type="match status" value="1"/>
</dbReference>
<dbReference type="Gene3D" id="2.30.40.10">
    <property type="entry name" value="Urease, subunit C, domain 1"/>
    <property type="match status" value="1"/>
</dbReference>
<dbReference type="InterPro" id="IPR006680">
    <property type="entry name" value="Amidohydro-rel"/>
</dbReference>
<dbReference type="InterPro" id="IPR003764">
    <property type="entry name" value="GlcNAc_6-P_deAcase"/>
</dbReference>
<dbReference type="InterPro" id="IPR011059">
    <property type="entry name" value="Metal-dep_hydrolase_composite"/>
</dbReference>
<dbReference type="InterPro" id="IPR032466">
    <property type="entry name" value="Metal_Hydrolase"/>
</dbReference>
<dbReference type="NCBIfam" id="TIGR00221">
    <property type="entry name" value="nagA"/>
    <property type="match status" value="1"/>
</dbReference>
<dbReference type="NCBIfam" id="NF008371">
    <property type="entry name" value="PRK11170.1"/>
    <property type="match status" value="1"/>
</dbReference>
<dbReference type="PANTHER" id="PTHR11113">
    <property type="entry name" value="N-ACETYLGLUCOSAMINE-6-PHOSPHATE DEACETYLASE"/>
    <property type="match status" value="1"/>
</dbReference>
<dbReference type="PANTHER" id="PTHR11113:SF14">
    <property type="entry name" value="N-ACETYLGLUCOSAMINE-6-PHOSPHATE DEACETYLASE"/>
    <property type="match status" value="1"/>
</dbReference>
<dbReference type="Pfam" id="PF01979">
    <property type="entry name" value="Amidohydro_1"/>
    <property type="match status" value="1"/>
</dbReference>
<dbReference type="PIRSF" id="PIRSF038994">
    <property type="entry name" value="NagA"/>
    <property type="match status" value="1"/>
</dbReference>
<dbReference type="SUPFAM" id="SSF51338">
    <property type="entry name" value="Composite domain of metallo-dependent hydrolases"/>
    <property type="match status" value="1"/>
</dbReference>
<dbReference type="SUPFAM" id="SSF51556">
    <property type="entry name" value="Metallo-dependent hydrolases"/>
    <property type="match status" value="1"/>
</dbReference>
<sequence length="382" mass="40949">MYALTQGRIFTGHEFLDDHAVVIADGLIKSVCPVAELPPEIEQRSLNGAILSPGFIDVQLNGCGGVQFNDTAEAVSVETLEIMQKANEKSGCTNYLPTLITTSDELMKQGVRVMREYLAKHPNQALGLHLEGPWLNLVKKGTHNPNFVRKPDAALVDFLCENADVITKVTLAPEMVPAEVISKLANAGIVVSAGHSNATLKEAKAGFRAGITFATHLYNAMPYITGREPGLAGAILDEADIYCGIIADGLHVDYANIRNAKRLKGDKLCLVTDATAPAGANIEQFIFAGKTIYYRNGLCVDENGTLSGSSLTMIEGVRNLVEHCGIALDEVLRMATLYPARAIGVEKRLGTLAAGKVANLTAFTPDFKITKTIVNGNEVVTQ</sequence>